<name>AROC_STRPQ</name>
<comment type="function">
    <text evidence="2">Catalyzes the anti-1,4-elimination of the C-3 phosphate and the C-6 proR hydrogen from 5-enolpyruvylshikimate-3-phosphate (EPSP) to yield chorismate, which is the branch point compound that serves as the starting substrate for the three terminal pathways of aromatic amino acid biosynthesis. This reaction introduces a second double bond into the aromatic ring system.</text>
</comment>
<comment type="catalytic activity">
    <reaction evidence="2">
        <text>5-O-(1-carboxyvinyl)-3-phosphoshikimate = chorismate + phosphate</text>
        <dbReference type="Rhea" id="RHEA:21020"/>
        <dbReference type="ChEBI" id="CHEBI:29748"/>
        <dbReference type="ChEBI" id="CHEBI:43474"/>
        <dbReference type="ChEBI" id="CHEBI:57701"/>
        <dbReference type="EC" id="4.2.3.5"/>
    </reaction>
</comment>
<comment type="cofactor">
    <cofactor evidence="2">
        <name>FMNH2</name>
        <dbReference type="ChEBI" id="CHEBI:57618"/>
    </cofactor>
    <text evidence="2">Reduced FMN (FMNH(2)).</text>
</comment>
<comment type="pathway">
    <text evidence="2">Metabolic intermediate biosynthesis; chorismate biosynthesis; chorismate from D-erythrose 4-phosphate and phosphoenolpyruvate: step 7/7.</text>
</comment>
<comment type="subunit">
    <text evidence="1 2">Homotetramer.</text>
</comment>
<comment type="similarity">
    <text evidence="2 3">Belongs to the chorismate synthase family.</text>
</comment>
<protein>
    <recommendedName>
        <fullName evidence="2">Chorismate synthase</fullName>
        <shortName evidence="2">CS</shortName>
        <ecNumber evidence="2">4.2.3.5</ecNumber>
    </recommendedName>
    <alternativeName>
        <fullName evidence="2">5-enolpyruvylshikimate-3-phosphate phospholyase</fullName>
    </alternativeName>
</protein>
<evidence type="ECO:0000250" key="1"/>
<evidence type="ECO:0000255" key="2">
    <source>
        <dbReference type="HAMAP-Rule" id="MF_00300"/>
    </source>
</evidence>
<evidence type="ECO:0000305" key="3"/>
<feature type="chain" id="PRO_0000411277" description="Chorismate synthase">
    <location>
        <begin position="1"/>
        <end position="388"/>
    </location>
</feature>
<feature type="binding site" evidence="2">
    <location>
        <position position="39"/>
    </location>
    <ligand>
        <name>NADP(+)</name>
        <dbReference type="ChEBI" id="CHEBI:58349"/>
    </ligand>
</feature>
<feature type="binding site" evidence="2">
    <location>
        <position position="45"/>
    </location>
    <ligand>
        <name>NADP(+)</name>
        <dbReference type="ChEBI" id="CHEBI:58349"/>
    </ligand>
</feature>
<feature type="binding site" evidence="2">
    <location>
        <begin position="130"/>
        <end position="132"/>
    </location>
    <ligand>
        <name>FMN</name>
        <dbReference type="ChEBI" id="CHEBI:58210"/>
    </ligand>
</feature>
<feature type="binding site" evidence="2">
    <location>
        <begin position="251"/>
        <end position="252"/>
    </location>
    <ligand>
        <name>FMN</name>
        <dbReference type="ChEBI" id="CHEBI:58210"/>
    </ligand>
</feature>
<feature type="binding site" evidence="2">
    <location>
        <position position="296"/>
    </location>
    <ligand>
        <name>FMN</name>
        <dbReference type="ChEBI" id="CHEBI:58210"/>
    </ligand>
</feature>
<feature type="binding site" evidence="2">
    <location>
        <begin position="311"/>
        <end position="315"/>
    </location>
    <ligand>
        <name>FMN</name>
        <dbReference type="ChEBI" id="CHEBI:58210"/>
    </ligand>
</feature>
<feature type="binding site" evidence="2">
    <location>
        <position position="337"/>
    </location>
    <ligand>
        <name>FMN</name>
        <dbReference type="ChEBI" id="CHEBI:58210"/>
    </ligand>
</feature>
<proteinExistence type="inferred from homology"/>
<organism>
    <name type="scientific">Streptococcus pyogenes serotype M3 (strain SSI-1)</name>
    <dbReference type="NCBI Taxonomy" id="193567"/>
    <lineage>
        <taxon>Bacteria</taxon>
        <taxon>Bacillati</taxon>
        <taxon>Bacillota</taxon>
        <taxon>Bacilli</taxon>
        <taxon>Lactobacillales</taxon>
        <taxon>Streptococcaceae</taxon>
        <taxon>Streptococcus</taxon>
    </lineage>
</organism>
<reference key="1">
    <citation type="journal article" date="2003" name="Genome Res.">
        <title>Genome sequence of an M3 strain of Streptococcus pyogenes reveals a large-scale genomic rearrangement in invasive strains and new insights into phage evolution.</title>
        <authorList>
            <person name="Nakagawa I."/>
            <person name="Kurokawa K."/>
            <person name="Yamashita A."/>
            <person name="Nakata M."/>
            <person name="Tomiyasu Y."/>
            <person name="Okahashi N."/>
            <person name="Kawabata S."/>
            <person name="Yamazaki K."/>
            <person name="Shiba T."/>
            <person name="Yasunaga T."/>
            <person name="Hayashi H."/>
            <person name="Hattori M."/>
            <person name="Hamada S."/>
        </authorList>
    </citation>
    <scope>NUCLEOTIDE SEQUENCE [LARGE SCALE GENOMIC DNA]</scope>
    <source>
        <strain>SSI-1</strain>
    </source>
</reference>
<keyword id="KW-0028">Amino-acid biosynthesis</keyword>
<keyword id="KW-0057">Aromatic amino acid biosynthesis</keyword>
<keyword id="KW-0274">FAD</keyword>
<keyword id="KW-0285">Flavoprotein</keyword>
<keyword id="KW-0288">FMN</keyword>
<keyword id="KW-0456">Lyase</keyword>
<keyword id="KW-0521">NADP</keyword>
<sequence>MRYLTAGESHGPSLTAIIEGIPAGLTLHPADIDHELQRRQGGYGRGARMSIETDRVQISSGVRHGKTTGAPITLTVINKDHQKWLDVMAVGDIEETLKLKRRVKHPRPGHADLVGGIKYHFNDLRDALERSSARETTMRVAVGAVAKRILAELGIDMLHHILIFGGITITIPSKLSFRELQERALHSELSIVNPKQEKEIKTYIDKIKKEGDTIGGIIETIVQGVPAGLGSYVQWDKKLDAKLAQAVLSINAFKGVEFGVGFDMGFQKGSQVMDEITWTPTQGYGRQTNHLGGFEGGMTTGQPLVVKGVMKPIPTLYKPLMSVDIDSHEPYKATVERSDPTALPAAGVIMENVVATVLAKEILETFSSTTMSELQKAFSDYRAYVKQF</sequence>
<accession>P0CZ79</accession>
<accession>Q878I4</accession>
<accession>Q8K7Z6</accession>
<gene>
    <name evidence="2" type="primary">aroC</name>
    <name type="ordered locus">SPs1310</name>
</gene>
<dbReference type="EC" id="4.2.3.5" evidence="2"/>
<dbReference type="EMBL" id="BA000034">
    <property type="protein sequence ID" value="BAC64405.1"/>
    <property type="molecule type" value="Genomic_DNA"/>
</dbReference>
<dbReference type="RefSeq" id="WP_002985136.1">
    <property type="nucleotide sequence ID" value="NC_004606.1"/>
</dbReference>
<dbReference type="SMR" id="P0CZ79"/>
<dbReference type="GeneID" id="69901071"/>
<dbReference type="KEGG" id="sps:SPs1310"/>
<dbReference type="HOGENOM" id="CLU_034547_2_0_9"/>
<dbReference type="UniPathway" id="UPA00053">
    <property type="reaction ID" value="UER00090"/>
</dbReference>
<dbReference type="GO" id="GO:0005829">
    <property type="term" value="C:cytosol"/>
    <property type="evidence" value="ECO:0007669"/>
    <property type="project" value="TreeGrafter"/>
</dbReference>
<dbReference type="GO" id="GO:0004107">
    <property type="term" value="F:chorismate synthase activity"/>
    <property type="evidence" value="ECO:0007669"/>
    <property type="project" value="UniProtKB-UniRule"/>
</dbReference>
<dbReference type="GO" id="GO:0010181">
    <property type="term" value="F:FMN binding"/>
    <property type="evidence" value="ECO:0007669"/>
    <property type="project" value="TreeGrafter"/>
</dbReference>
<dbReference type="GO" id="GO:0008652">
    <property type="term" value="P:amino acid biosynthetic process"/>
    <property type="evidence" value="ECO:0007669"/>
    <property type="project" value="UniProtKB-KW"/>
</dbReference>
<dbReference type="GO" id="GO:0009073">
    <property type="term" value="P:aromatic amino acid family biosynthetic process"/>
    <property type="evidence" value="ECO:0007669"/>
    <property type="project" value="UniProtKB-KW"/>
</dbReference>
<dbReference type="GO" id="GO:0009423">
    <property type="term" value="P:chorismate biosynthetic process"/>
    <property type="evidence" value="ECO:0007669"/>
    <property type="project" value="UniProtKB-UniRule"/>
</dbReference>
<dbReference type="CDD" id="cd07304">
    <property type="entry name" value="Chorismate_synthase"/>
    <property type="match status" value="1"/>
</dbReference>
<dbReference type="FunFam" id="3.60.150.10:FF:000002">
    <property type="entry name" value="Chorismate synthase"/>
    <property type="match status" value="1"/>
</dbReference>
<dbReference type="Gene3D" id="3.60.150.10">
    <property type="entry name" value="Chorismate synthase AroC"/>
    <property type="match status" value="1"/>
</dbReference>
<dbReference type="HAMAP" id="MF_00300">
    <property type="entry name" value="Chorismate_synth"/>
    <property type="match status" value="1"/>
</dbReference>
<dbReference type="InterPro" id="IPR000453">
    <property type="entry name" value="Chorismate_synth"/>
</dbReference>
<dbReference type="InterPro" id="IPR035904">
    <property type="entry name" value="Chorismate_synth_AroC_sf"/>
</dbReference>
<dbReference type="InterPro" id="IPR020541">
    <property type="entry name" value="Chorismate_synthase_CS"/>
</dbReference>
<dbReference type="NCBIfam" id="TIGR00033">
    <property type="entry name" value="aroC"/>
    <property type="match status" value="1"/>
</dbReference>
<dbReference type="NCBIfam" id="NF003793">
    <property type="entry name" value="PRK05382.1"/>
    <property type="match status" value="1"/>
</dbReference>
<dbReference type="PANTHER" id="PTHR21085">
    <property type="entry name" value="CHORISMATE SYNTHASE"/>
    <property type="match status" value="1"/>
</dbReference>
<dbReference type="PANTHER" id="PTHR21085:SF0">
    <property type="entry name" value="CHORISMATE SYNTHASE"/>
    <property type="match status" value="1"/>
</dbReference>
<dbReference type="Pfam" id="PF01264">
    <property type="entry name" value="Chorismate_synt"/>
    <property type="match status" value="1"/>
</dbReference>
<dbReference type="PIRSF" id="PIRSF001456">
    <property type="entry name" value="Chorismate_synth"/>
    <property type="match status" value="1"/>
</dbReference>
<dbReference type="SUPFAM" id="SSF103263">
    <property type="entry name" value="Chorismate synthase, AroC"/>
    <property type="match status" value="1"/>
</dbReference>
<dbReference type="PROSITE" id="PS00787">
    <property type="entry name" value="CHORISMATE_SYNTHASE_1"/>
    <property type="match status" value="1"/>
</dbReference>
<dbReference type="PROSITE" id="PS00788">
    <property type="entry name" value="CHORISMATE_SYNTHASE_2"/>
    <property type="match status" value="1"/>
</dbReference>
<dbReference type="PROSITE" id="PS00789">
    <property type="entry name" value="CHORISMATE_SYNTHASE_3"/>
    <property type="match status" value="1"/>
</dbReference>